<accession>C3L2Y4</accession>
<name>THIC_CLOB6</name>
<reference key="1">
    <citation type="submission" date="2008-05" db="EMBL/GenBank/DDBJ databases">
        <title>Genome sequence of Clostridium botulinum Ba4 strain 657.</title>
        <authorList>
            <person name="Shrivastava S."/>
            <person name="Brown J.L."/>
            <person name="Bruce D."/>
            <person name="Detter C."/>
            <person name="Munk C."/>
            <person name="Smith L.A."/>
            <person name="Smith T.J."/>
            <person name="Sutton G."/>
            <person name="Brettin T.S."/>
        </authorList>
    </citation>
    <scope>NUCLEOTIDE SEQUENCE [LARGE SCALE GENOMIC DNA]</scope>
    <source>
        <strain>657 / Type Ba4</strain>
    </source>
</reference>
<keyword id="KW-0004">4Fe-4S</keyword>
<keyword id="KW-0408">Iron</keyword>
<keyword id="KW-0411">Iron-sulfur</keyword>
<keyword id="KW-0456">Lyase</keyword>
<keyword id="KW-0479">Metal-binding</keyword>
<keyword id="KW-0949">S-adenosyl-L-methionine</keyword>
<keyword id="KW-0784">Thiamine biosynthesis</keyword>
<keyword id="KW-0862">Zinc</keyword>
<protein>
    <recommendedName>
        <fullName evidence="1">Phosphomethylpyrimidine synthase</fullName>
        <ecNumber evidence="1">4.1.99.17</ecNumber>
    </recommendedName>
    <alternativeName>
        <fullName evidence="1">Hydroxymethylpyrimidine phosphate synthase</fullName>
        <shortName evidence="1">HMP-P synthase</shortName>
        <shortName evidence="1">HMP-phosphate synthase</shortName>
        <shortName evidence="1">HMPP synthase</shortName>
    </alternativeName>
    <alternativeName>
        <fullName evidence="1">Thiamine biosynthesis protein ThiC</fullName>
    </alternativeName>
</protein>
<comment type="function">
    <text evidence="1">Catalyzes the synthesis of the hydroxymethylpyrimidine phosphate (HMP-P) moiety of thiamine from aminoimidazole ribotide (AIR) in a radical S-adenosyl-L-methionine (SAM)-dependent reaction.</text>
</comment>
<comment type="catalytic activity">
    <reaction evidence="1">
        <text>5-amino-1-(5-phospho-beta-D-ribosyl)imidazole + S-adenosyl-L-methionine = 4-amino-2-methyl-5-(phosphooxymethyl)pyrimidine + CO + 5'-deoxyadenosine + formate + L-methionine + 3 H(+)</text>
        <dbReference type="Rhea" id="RHEA:24840"/>
        <dbReference type="ChEBI" id="CHEBI:15378"/>
        <dbReference type="ChEBI" id="CHEBI:15740"/>
        <dbReference type="ChEBI" id="CHEBI:17245"/>
        <dbReference type="ChEBI" id="CHEBI:17319"/>
        <dbReference type="ChEBI" id="CHEBI:57844"/>
        <dbReference type="ChEBI" id="CHEBI:58354"/>
        <dbReference type="ChEBI" id="CHEBI:59789"/>
        <dbReference type="ChEBI" id="CHEBI:137981"/>
        <dbReference type="EC" id="4.1.99.17"/>
    </reaction>
</comment>
<comment type="cofactor">
    <cofactor evidence="1">
        <name>[4Fe-4S] cluster</name>
        <dbReference type="ChEBI" id="CHEBI:49883"/>
    </cofactor>
    <text evidence="1">Binds 1 [4Fe-4S] cluster per subunit. The cluster is coordinated with 3 cysteines and an exchangeable S-adenosyl-L-methionine.</text>
</comment>
<comment type="pathway">
    <text evidence="1">Cofactor biosynthesis; thiamine diphosphate biosynthesis.</text>
</comment>
<comment type="similarity">
    <text evidence="1">Belongs to the ThiC family.</text>
</comment>
<dbReference type="EC" id="4.1.99.17" evidence="1"/>
<dbReference type="EMBL" id="CP001083">
    <property type="protein sequence ID" value="ACQ52624.1"/>
    <property type="molecule type" value="Genomic_DNA"/>
</dbReference>
<dbReference type="RefSeq" id="WP_003359938.1">
    <property type="nucleotide sequence ID" value="NC_012658.1"/>
</dbReference>
<dbReference type="SMR" id="C3L2Y4"/>
<dbReference type="KEGG" id="cbi:CLJ_B3165"/>
<dbReference type="HOGENOM" id="CLU_013181_2_2_9"/>
<dbReference type="UniPathway" id="UPA00060"/>
<dbReference type="Proteomes" id="UP000002333">
    <property type="component" value="Chromosome"/>
</dbReference>
<dbReference type="GO" id="GO:0005829">
    <property type="term" value="C:cytosol"/>
    <property type="evidence" value="ECO:0007669"/>
    <property type="project" value="TreeGrafter"/>
</dbReference>
<dbReference type="GO" id="GO:0051539">
    <property type="term" value="F:4 iron, 4 sulfur cluster binding"/>
    <property type="evidence" value="ECO:0007669"/>
    <property type="project" value="UniProtKB-KW"/>
</dbReference>
<dbReference type="GO" id="GO:0016830">
    <property type="term" value="F:carbon-carbon lyase activity"/>
    <property type="evidence" value="ECO:0007669"/>
    <property type="project" value="InterPro"/>
</dbReference>
<dbReference type="GO" id="GO:0008270">
    <property type="term" value="F:zinc ion binding"/>
    <property type="evidence" value="ECO:0007669"/>
    <property type="project" value="UniProtKB-UniRule"/>
</dbReference>
<dbReference type="GO" id="GO:0009228">
    <property type="term" value="P:thiamine biosynthetic process"/>
    <property type="evidence" value="ECO:0007669"/>
    <property type="project" value="UniProtKB-KW"/>
</dbReference>
<dbReference type="GO" id="GO:0009229">
    <property type="term" value="P:thiamine diphosphate biosynthetic process"/>
    <property type="evidence" value="ECO:0007669"/>
    <property type="project" value="UniProtKB-UniRule"/>
</dbReference>
<dbReference type="FunFam" id="3.20.20.540:FF:000001">
    <property type="entry name" value="Phosphomethylpyrimidine synthase"/>
    <property type="match status" value="1"/>
</dbReference>
<dbReference type="Gene3D" id="6.10.250.620">
    <property type="match status" value="1"/>
</dbReference>
<dbReference type="Gene3D" id="3.20.20.540">
    <property type="entry name" value="Radical SAM ThiC family, central domain"/>
    <property type="match status" value="1"/>
</dbReference>
<dbReference type="HAMAP" id="MF_00089">
    <property type="entry name" value="ThiC"/>
    <property type="match status" value="1"/>
</dbReference>
<dbReference type="InterPro" id="IPR037509">
    <property type="entry name" value="ThiC"/>
</dbReference>
<dbReference type="InterPro" id="IPR038521">
    <property type="entry name" value="ThiC/Bza_core_dom"/>
</dbReference>
<dbReference type="InterPro" id="IPR002817">
    <property type="entry name" value="ThiC/BzaA/B"/>
</dbReference>
<dbReference type="NCBIfam" id="NF009895">
    <property type="entry name" value="PRK13352.1"/>
    <property type="match status" value="1"/>
</dbReference>
<dbReference type="NCBIfam" id="TIGR00190">
    <property type="entry name" value="thiC"/>
    <property type="match status" value="1"/>
</dbReference>
<dbReference type="PANTHER" id="PTHR30557:SF1">
    <property type="entry name" value="PHOSPHOMETHYLPYRIMIDINE SYNTHASE, CHLOROPLASTIC"/>
    <property type="match status" value="1"/>
</dbReference>
<dbReference type="PANTHER" id="PTHR30557">
    <property type="entry name" value="THIAMINE BIOSYNTHESIS PROTEIN THIC"/>
    <property type="match status" value="1"/>
</dbReference>
<dbReference type="Pfam" id="PF01964">
    <property type="entry name" value="ThiC_Rad_SAM"/>
    <property type="match status" value="1"/>
</dbReference>
<dbReference type="SFLD" id="SFLDF00407">
    <property type="entry name" value="phosphomethylpyrimidine_syntha"/>
    <property type="match status" value="1"/>
</dbReference>
<dbReference type="SFLD" id="SFLDG01114">
    <property type="entry name" value="phosphomethylpyrimidine_syntha"/>
    <property type="match status" value="1"/>
</dbReference>
<dbReference type="SFLD" id="SFLDS00113">
    <property type="entry name" value="Radical_SAM_Phosphomethylpyrim"/>
    <property type="match status" value="1"/>
</dbReference>
<feature type="chain" id="PRO_1000202649" description="Phosphomethylpyrimidine synthase">
    <location>
        <begin position="1"/>
        <end position="437"/>
    </location>
</feature>
<feature type="binding site" evidence="1">
    <location>
        <position position="69"/>
    </location>
    <ligand>
        <name>substrate</name>
    </ligand>
</feature>
<feature type="binding site" evidence="1">
    <location>
        <position position="98"/>
    </location>
    <ligand>
        <name>substrate</name>
    </ligand>
</feature>
<feature type="binding site" evidence="1">
    <location>
        <position position="127"/>
    </location>
    <ligand>
        <name>substrate</name>
    </ligand>
</feature>
<feature type="binding site" evidence="1">
    <location>
        <position position="163"/>
    </location>
    <ligand>
        <name>substrate</name>
    </ligand>
</feature>
<feature type="binding site" evidence="1">
    <location>
        <begin position="185"/>
        <end position="187"/>
    </location>
    <ligand>
        <name>substrate</name>
    </ligand>
</feature>
<feature type="binding site" evidence="1">
    <location>
        <begin position="226"/>
        <end position="229"/>
    </location>
    <ligand>
        <name>substrate</name>
    </ligand>
</feature>
<feature type="binding site" evidence="1">
    <location>
        <position position="265"/>
    </location>
    <ligand>
        <name>substrate</name>
    </ligand>
</feature>
<feature type="binding site" evidence="1">
    <location>
        <position position="269"/>
    </location>
    <ligand>
        <name>Zn(2+)</name>
        <dbReference type="ChEBI" id="CHEBI:29105"/>
    </ligand>
</feature>
<feature type="binding site" evidence="1">
    <location>
        <position position="292"/>
    </location>
    <ligand>
        <name>substrate</name>
    </ligand>
</feature>
<feature type="binding site" evidence="1">
    <location>
        <position position="333"/>
    </location>
    <ligand>
        <name>Zn(2+)</name>
        <dbReference type="ChEBI" id="CHEBI:29105"/>
    </ligand>
</feature>
<feature type="binding site" evidence="1">
    <location>
        <position position="409"/>
    </location>
    <ligand>
        <name>[4Fe-4S] cluster</name>
        <dbReference type="ChEBI" id="CHEBI:49883"/>
        <note>4Fe-4S-S-AdoMet</note>
    </ligand>
</feature>
<feature type="binding site" evidence="1">
    <location>
        <position position="412"/>
    </location>
    <ligand>
        <name>[4Fe-4S] cluster</name>
        <dbReference type="ChEBI" id="CHEBI:49883"/>
        <note>4Fe-4S-S-AdoMet</note>
    </ligand>
</feature>
<feature type="binding site" evidence="1">
    <location>
        <position position="416"/>
    </location>
    <ligand>
        <name>[4Fe-4S] cluster</name>
        <dbReference type="ChEBI" id="CHEBI:49883"/>
        <note>4Fe-4S-S-AdoMet</note>
    </ligand>
</feature>
<gene>
    <name evidence="1" type="primary">thiC</name>
    <name type="ordered locus">CLJ_B3165</name>
</gene>
<evidence type="ECO:0000255" key="1">
    <source>
        <dbReference type="HAMAP-Rule" id="MF_00089"/>
    </source>
</evidence>
<proteinExistence type="inferred from homology"/>
<organism>
    <name type="scientific">Clostridium botulinum (strain 657 / Type Ba4)</name>
    <dbReference type="NCBI Taxonomy" id="515621"/>
    <lineage>
        <taxon>Bacteria</taxon>
        <taxon>Bacillati</taxon>
        <taxon>Bacillota</taxon>
        <taxon>Clostridia</taxon>
        <taxon>Eubacteriales</taxon>
        <taxon>Clostridiaceae</taxon>
        <taxon>Clostridium</taxon>
    </lineage>
</organism>
<sequence>MNYTTQMDAAKKGIVTKEMEIVAKKENMDVKDLMELISKGKVAIPANKNHKSLDPEGIGQGLRTKINVNLGISKDCYNIDMELEKVQKAIDMKAEAIMDLSCFGKTEEFRKRLIDMSPAIIGTVPIYDAVGFYDKELKDITSEEFLKVAEKHAENGADFLTIHVGMNRKTAATFKKNPRRMNIVSRGGSLLYAWMELNNKENPFYERFDELLDICEKYDVTLSLGDACRPGCIEDSTDASQIEELIALGELTKRAWERNVQVIIEGPGHMTLDEIETNMKIEKKLCHGAPFYVLGPIVTDIAPGYDHITSAIGGAIAATHGADFLCYVTPAEHLRLPNLDDMKEGIIASKIAAHAADLAKGVKGARDLDNAMAKARRDLDWERMFELSIDEEKARRYREESKAKSKDSCTMCGKMCAVRNMNRVTEGKDLNMLRDDD</sequence>